<evidence type="ECO:0000250" key="1"/>
<evidence type="ECO:0000250" key="2">
    <source>
        <dbReference type="UniProtKB" id="Q9VAM6"/>
    </source>
</evidence>
<evidence type="ECO:0000255" key="3"/>
<evidence type="ECO:0000305" key="4"/>
<sequence>MEPISHLVKSSLPNYLSSLPVPDSLGGWFKLSFKDWLALIPPTAVLAGLGYTAYLAFCPAAQCSAKSARCNNHIRKHEAKVVDMIDVEDIAEKAAFCRCWKTKNWPYCDGSHGEHNKLTGDNVGPVVVSKKK</sequence>
<keyword id="KW-0001">2Fe-2S</keyword>
<keyword id="KW-0256">Endoplasmic reticulum</keyword>
<keyword id="KW-0408">Iron</keyword>
<keyword id="KW-0411">Iron-sulfur</keyword>
<keyword id="KW-0472">Membrane</keyword>
<keyword id="KW-0479">Metal-binding</keyword>
<keyword id="KW-1185">Reference proteome</keyword>
<keyword id="KW-0812">Transmembrane</keyword>
<keyword id="KW-1133">Transmembrane helix</keyword>
<proteinExistence type="inferred from homology"/>
<gene>
    <name evidence="2" type="primary">Cisd2</name>
    <name type="ORF">GH14305</name>
</gene>
<comment type="cofactor">
    <cofactor evidence="1">
        <name>[2Fe-2S] cluster</name>
        <dbReference type="ChEBI" id="CHEBI:190135"/>
    </cofactor>
    <text evidence="1">Binds 1 [2Fe-2S] cluster.</text>
</comment>
<comment type="subcellular location">
    <subcellularLocation>
        <location evidence="4">Endoplasmic reticulum membrane</location>
        <topology evidence="4">Single-pass membrane protein</topology>
    </subcellularLocation>
</comment>
<comment type="similarity">
    <text evidence="4">Belongs to the CISD protein family. CISD2 subfamily.</text>
</comment>
<protein>
    <recommendedName>
        <fullName>CDGSH iron-sulfur domain-containing protein 2 homolog</fullName>
    </recommendedName>
</protein>
<feature type="chain" id="PRO_0000392025" description="CDGSH iron-sulfur domain-containing protein 2 homolog">
    <location>
        <begin position="1"/>
        <end position="132"/>
    </location>
</feature>
<feature type="topological domain" description="Lumenal" evidence="3">
    <location>
        <begin position="1"/>
        <end position="35"/>
    </location>
</feature>
<feature type="transmembrane region" description="Helical" evidence="3">
    <location>
        <begin position="36"/>
        <end position="58"/>
    </location>
</feature>
<feature type="topological domain" description="Cytoplasmic" evidence="3">
    <location>
        <begin position="59"/>
        <end position="132"/>
    </location>
</feature>
<feature type="binding site" evidence="1">
    <location>
        <position position="97"/>
    </location>
    <ligand>
        <name>[2Fe-2S] cluster</name>
        <dbReference type="ChEBI" id="CHEBI:190135"/>
    </ligand>
</feature>
<feature type="binding site" evidence="1">
    <location>
        <position position="99"/>
    </location>
    <ligand>
        <name>[2Fe-2S] cluster</name>
        <dbReference type="ChEBI" id="CHEBI:190135"/>
    </ligand>
</feature>
<feature type="binding site" evidence="1">
    <location>
        <position position="108"/>
    </location>
    <ligand>
        <name>[2Fe-2S] cluster</name>
        <dbReference type="ChEBI" id="CHEBI:190135"/>
    </ligand>
</feature>
<feature type="binding site" evidence="1">
    <location>
        <position position="112"/>
    </location>
    <ligand>
        <name>[2Fe-2S] cluster</name>
        <dbReference type="ChEBI" id="CHEBI:190135"/>
    </ligand>
</feature>
<dbReference type="EMBL" id="CH916377">
    <property type="protein sequence ID" value="EDV90754.1"/>
    <property type="molecule type" value="Genomic_DNA"/>
</dbReference>
<dbReference type="SMR" id="B4JYJ2"/>
<dbReference type="FunCoup" id="B4JYJ2">
    <property type="interactions" value="1397"/>
</dbReference>
<dbReference type="STRING" id="7222.B4JYJ2"/>
<dbReference type="EnsemblMetazoa" id="FBtr0149719">
    <property type="protein sequence ID" value="FBpp0148211"/>
    <property type="gene ID" value="FBgn0121781"/>
</dbReference>
<dbReference type="EnsemblMetazoa" id="XM_001996060.2">
    <property type="protein sequence ID" value="XP_001996096.1"/>
    <property type="gene ID" value="LOC6569745"/>
</dbReference>
<dbReference type="GeneID" id="6569745"/>
<dbReference type="KEGG" id="dgr:6569745"/>
<dbReference type="CTD" id="493856"/>
<dbReference type="eggNOG" id="KOG3461">
    <property type="taxonomic scope" value="Eukaryota"/>
</dbReference>
<dbReference type="HOGENOM" id="CLU_132293_1_0_1"/>
<dbReference type="InParanoid" id="B4JYJ2"/>
<dbReference type="OMA" id="QIRKHEP"/>
<dbReference type="OrthoDB" id="449252at2759"/>
<dbReference type="PhylomeDB" id="B4JYJ2"/>
<dbReference type="Proteomes" id="UP000001070">
    <property type="component" value="Unassembled WGS sequence"/>
</dbReference>
<dbReference type="GO" id="GO:0005789">
    <property type="term" value="C:endoplasmic reticulum membrane"/>
    <property type="evidence" value="ECO:0007669"/>
    <property type="project" value="UniProtKB-SubCell"/>
</dbReference>
<dbReference type="GO" id="GO:0005741">
    <property type="term" value="C:mitochondrial outer membrane"/>
    <property type="evidence" value="ECO:0007669"/>
    <property type="project" value="TreeGrafter"/>
</dbReference>
<dbReference type="GO" id="GO:0051537">
    <property type="term" value="F:2 iron, 2 sulfur cluster binding"/>
    <property type="evidence" value="ECO:0007669"/>
    <property type="project" value="UniProtKB-KW"/>
</dbReference>
<dbReference type="GO" id="GO:0046872">
    <property type="term" value="F:metal ion binding"/>
    <property type="evidence" value="ECO:0007669"/>
    <property type="project" value="UniProtKB-KW"/>
</dbReference>
<dbReference type="GO" id="GO:0010506">
    <property type="term" value="P:regulation of autophagy"/>
    <property type="evidence" value="ECO:0007669"/>
    <property type="project" value="InterPro"/>
</dbReference>
<dbReference type="Gene3D" id="3.40.5.90">
    <property type="entry name" value="CDGSH iron-sulfur domain, mitoNEET-type"/>
    <property type="match status" value="1"/>
</dbReference>
<dbReference type="InterPro" id="IPR045131">
    <property type="entry name" value="CISD1/2"/>
</dbReference>
<dbReference type="InterPro" id="IPR018967">
    <property type="entry name" value="FeS-contain_CDGSH-typ"/>
</dbReference>
<dbReference type="InterPro" id="IPR019610">
    <property type="entry name" value="FeS-contain_mitoNEET_N"/>
</dbReference>
<dbReference type="InterPro" id="IPR042216">
    <property type="entry name" value="MitoNEET_CISD"/>
</dbReference>
<dbReference type="PANTHER" id="PTHR13680">
    <property type="entry name" value="CDGSH IRON-SULFUR DOMAIN-CONTAINING PROTEIN 1"/>
    <property type="match status" value="1"/>
</dbReference>
<dbReference type="PANTHER" id="PTHR13680:SF5">
    <property type="entry name" value="CDGSH IRON-SULFUR DOMAIN-CONTAINING PROTEIN 1"/>
    <property type="match status" value="1"/>
</dbReference>
<dbReference type="Pfam" id="PF10660">
    <property type="entry name" value="MitoNEET_N"/>
    <property type="match status" value="1"/>
</dbReference>
<dbReference type="Pfam" id="PF09360">
    <property type="entry name" value="zf-CDGSH"/>
    <property type="match status" value="1"/>
</dbReference>
<dbReference type="SMART" id="SM00704">
    <property type="entry name" value="ZnF_CDGSH"/>
    <property type="match status" value="1"/>
</dbReference>
<name>CISD2_DROGR</name>
<organism>
    <name type="scientific">Drosophila grimshawi</name>
    <name type="common">Hawaiian fruit fly</name>
    <name type="synonym">Idiomyia grimshawi</name>
    <dbReference type="NCBI Taxonomy" id="7222"/>
    <lineage>
        <taxon>Eukaryota</taxon>
        <taxon>Metazoa</taxon>
        <taxon>Ecdysozoa</taxon>
        <taxon>Arthropoda</taxon>
        <taxon>Hexapoda</taxon>
        <taxon>Insecta</taxon>
        <taxon>Pterygota</taxon>
        <taxon>Neoptera</taxon>
        <taxon>Endopterygota</taxon>
        <taxon>Diptera</taxon>
        <taxon>Brachycera</taxon>
        <taxon>Muscomorpha</taxon>
        <taxon>Ephydroidea</taxon>
        <taxon>Drosophilidae</taxon>
        <taxon>Drosophila</taxon>
        <taxon>Hawaiian Drosophila</taxon>
    </lineage>
</organism>
<reference key="1">
    <citation type="journal article" date="2007" name="Nature">
        <title>Evolution of genes and genomes on the Drosophila phylogeny.</title>
        <authorList>
            <consortium name="Drosophila 12 genomes consortium"/>
        </authorList>
    </citation>
    <scope>NUCLEOTIDE SEQUENCE [LARGE SCALE GENOMIC DNA]</scope>
    <source>
        <strain>Tucson 15287-2541.00</strain>
    </source>
</reference>
<accession>B4JYJ2</accession>